<accession>P13875</accession>
<evidence type="ECO:0000255" key="1">
    <source>
        <dbReference type="HAMAP-Rule" id="MF_04062"/>
    </source>
</evidence>
<sequence>MTLAKIELLKQLLRDNEAKTVLKQTTVDQYNIIRKFNTSRIERNPSLRMKWAMCSNFPLALTKGDMANRIPLEYKGIQLKTNAEDIGTKGQMCSIAAVTWWNTYGPIGDTEGFEKVYESFFLRKMRLDNATWGRITFGPVERVRKRVLLNPLTKEMPPDEASNVIMEILFPKEAGIPRESTWIHRELIKEKREKLKGTMITPIVLAYMLERELVARRRFLPVAGATSAEFIEMLHCLQGENWRQIYHPGGNKLTESRSQSMIVACRKIIRRSIVASNPLELAVEIANKTVIDTEPLKSCLAAIDGGDVACDIIRAALGLKIRQRQRFGRLELKRISGRGFKNDEEILIGNGTIQKIGIWDGEEEFHVRCGECRGILKKSKMRMEKLLINSAKKEDMKDLIILCMVFSQDTRMFQGVRGEINFLNRAGQLLSPMYQLQRYFLNRSNDLFDQWGYEEPPKASELHGINELMNASDYTLKGVVVTKNVIDDFSSTETEKVSITKNLSLIKRTGEVIMGANDVSELESQAQLMITYDTPKMWEMGTTKELVQNTYQWVLKNLVTLKAQFLLGKEDMFQWDAFEAFESIIPQKMAGQYSGFARAVLKQMRDQEVMKTDQFIKLLPFCFSPPKLRRNGEPYQFLRLMLKGGGENFIEVRKGSPLFSYNPQTEVLTICGRMMSLKGKIEDEERNRSMGNAVLAGFLVSGKYDPDLGDFKTIEELEKLKPGEKANILLYQGKPVKVVKRKRYSALSNDISQGIKRQRMTVESMGWALS</sequence>
<comment type="function">
    <text evidence="1">Plays an essential role in transcription initiation and cap-stealing mechanism, in which cellular capped pre-mRNAs are used to generate primers for viral transcription. Recognizes and binds a wide range of cap structures of target pre-RNAs which are subsequently cleaved after 10-13 nucleotides by the viral protein PA. Plays a role in the initiation of the viral genome replication and modulates the activity of the ribonucleoprotein (RNP) complex.</text>
</comment>
<comment type="subunit">
    <text evidence="1">Influenza RNA polymerase is composed of three subunits: PB1, PB2 and PA. Interacts (via N-terminus) with PB1 (via C-terminus). Interacts with nucleoprotein NP (via N-terminus).</text>
</comment>
<comment type="subcellular location">
    <subcellularLocation>
        <location evidence="1">Virion</location>
    </subcellularLocation>
    <subcellularLocation>
        <location evidence="1">Host nucleus</location>
    </subcellularLocation>
</comment>
<comment type="similarity">
    <text evidence="1">Belongs to the influenza viruses PB2 family.</text>
</comment>
<dbReference type="EMBL" id="M20163">
    <property type="protein sequence ID" value="AAA43762.1"/>
    <property type="molecule type" value="Genomic_RNA"/>
</dbReference>
<dbReference type="PIR" id="A28604">
    <property type="entry name" value="P3IVBC"/>
</dbReference>
<dbReference type="SMR" id="P13875"/>
<dbReference type="GO" id="GO:0042025">
    <property type="term" value="C:host cell nucleus"/>
    <property type="evidence" value="ECO:0007669"/>
    <property type="project" value="UniProtKB-SubCell"/>
</dbReference>
<dbReference type="GO" id="GO:0044423">
    <property type="term" value="C:virion component"/>
    <property type="evidence" value="ECO:0007669"/>
    <property type="project" value="UniProtKB-UniRule"/>
</dbReference>
<dbReference type="GO" id="GO:0003723">
    <property type="term" value="F:RNA binding"/>
    <property type="evidence" value="ECO:0007669"/>
    <property type="project" value="UniProtKB-UniRule"/>
</dbReference>
<dbReference type="GO" id="GO:0003968">
    <property type="term" value="F:RNA-directed RNA polymerase activity"/>
    <property type="evidence" value="ECO:0007669"/>
    <property type="project" value="UniProtKB-UniRule"/>
</dbReference>
<dbReference type="GO" id="GO:0006370">
    <property type="term" value="P:7-methylguanosine mRNA capping"/>
    <property type="evidence" value="ECO:0007669"/>
    <property type="project" value="UniProtKB-UniRule"/>
</dbReference>
<dbReference type="GO" id="GO:0075526">
    <property type="term" value="P:cap snatching"/>
    <property type="evidence" value="ECO:0007669"/>
    <property type="project" value="UniProtKB-UniRule"/>
</dbReference>
<dbReference type="GO" id="GO:0006351">
    <property type="term" value="P:DNA-templated transcription"/>
    <property type="evidence" value="ECO:0007669"/>
    <property type="project" value="UniProtKB-UniRule"/>
</dbReference>
<dbReference type="GO" id="GO:0039657">
    <property type="term" value="P:symbiont-mediated suppression of host gene expression"/>
    <property type="evidence" value="ECO:0007669"/>
    <property type="project" value="UniProtKB-KW"/>
</dbReference>
<dbReference type="GO" id="GO:0039523">
    <property type="term" value="P:symbiont-mediated suppression of host mRNA transcription via inhibition of RNA polymerase II activity"/>
    <property type="evidence" value="ECO:0007669"/>
    <property type="project" value="UniProtKB-UniRule"/>
</dbReference>
<dbReference type="GO" id="GO:0039694">
    <property type="term" value="P:viral RNA genome replication"/>
    <property type="evidence" value="ECO:0007669"/>
    <property type="project" value="InterPro"/>
</dbReference>
<dbReference type="Gene3D" id="3.30.30.90">
    <property type="entry name" value="Polymerase Basic Protein 2, C-terminal domain"/>
    <property type="match status" value="1"/>
</dbReference>
<dbReference type="HAMAP" id="MF_04062">
    <property type="entry name" value="INV_PB2"/>
    <property type="match status" value="1"/>
</dbReference>
<dbReference type="InterPro" id="IPR049110">
    <property type="entry name" value="Flu_PB2_2nd"/>
</dbReference>
<dbReference type="InterPro" id="IPR049114">
    <property type="entry name" value="Flu_PB2_6th"/>
</dbReference>
<dbReference type="InterPro" id="IPR049115">
    <property type="entry name" value="Flu_PB2_C"/>
</dbReference>
<dbReference type="InterPro" id="IPR048298">
    <property type="entry name" value="Flu_PB2_CAP-bd"/>
</dbReference>
<dbReference type="InterPro" id="IPR049111">
    <property type="entry name" value="Flu_PB2_middle"/>
</dbReference>
<dbReference type="InterPro" id="IPR049106">
    <property type="entry name" value="Flu_PB2_N"/>
</dbReference>
<dbReference type="InterPro" id="IPR001591">
    <property type="entry name" value="INV_PB2"/>
</dbReference>
<dbReference type="InterPro" id="IPR049113">
    <property type="entry name" value="PB2_helical"/>
</dbReference>
<dbReference type="InterPro" id="IPR037258">
    <property type="entry name" value="PDB2_C"/>
</dbReference>
<dbReference type="Pfam" id="PF20947">
    <property type="entry name" value="Flu_PB2_1st"/>
    <property type="match status" value="1"/>
</dbReference>
<dbReference type="Pfam" id="PF20948">
    <property type="entry name" value="Flu_PB2_2nd"/>
    <property type="match status" value="1"/>
</dbReference>
<dbReference type="Pfam" id="PF20949">
    <property type="entry name" value="Flu_PB2_3rd"/>
    <property type="match status" value="1"/>
</dbReference>
<dbReference type="Pfam" id="PF20950">
    <property type="entry name" value="Flu_PB2_4th"/>
    <property type="match status" value="1"/>
</dbReference>
<dbReference type="Pfam" id="PF00604">
    <property type="entry name" value="Flu_PB2_5th"/>
    <property type="match status" value="1"/>
</dbReference>
<dbReference type="Pfam" id="PF20951">
    <property type="entry name" value="Flu_PB2_6th"/>
    <property type="match status" value="1"/>
</dbReference>
<dbReference type="Pfam" id="PF20952">
    <property type="entry name" value="Flu_PB2_7th"/>
    <property type="match status" value="1"/>
</dbReference>
<dbReference type="SUPFAM" id="SSF160453">
    <property type="entry name" value="PB2 C-terminal domain-like"/>
    <property type="match status" value="1"/>
</dbReference>
<gene>
    <name evidence="1" type="primary">PB2</name>
</gene>
<proteinExistence type="inferred from homology"/>
<feature type="chain" id="PRO_0000078844" description="Polymerase basic protein 2">
    <location>
        <begin position="1"/>
        <end position="770"/>
    </location>
</feature>
<feature type="short sequence motif" description="Nuclear localization signal" evidence="1">
    <location>
        <begin position="740"/>
        <end position="743"/>
    </location>
</feature>
<protein>
    <recommendedName>
        <fullName evidence="1">Polymerase basic protein 2</fullName>
    </recommendedName>
    <alternativeName>
        <fullName evidence="1">RNA-directed RNA polymerase subunit P3</fullName>
    </alternativeName>
</protein>
<reference key="1">
    <citation type="journal article" date="1988" name="Virology">
        <title>Sequence comparison of wild-type and cold-adapted B/Ann Arbor/1/66 influenza virus genes.</title>
        <authorList>
            <person name="Deborde D.C."/>
            <person name="Donabedian A.M."/>
            <person name="Herlocher M.L."/>
            <person name="Naeve C.W."/>
            <person name="Maassab H.F."/>
        </authorList>
    </citation>
    <scope>NUCLEOTIDE SEQUENCE [GENOMIC RNA]</scope>
</reference>
<keyword id="KW-1157">Cap snatching</keyword>
<keyword id="KW-1262">Eukaryotic host gene expression shutoff by virus</keyword>
<keyword id="KW-1191">Eukaryotic host transcription shutoff by virus</keyword>
<keyword id="KW-1190">Host gene expression shutoff by virus</keyword>
<keyword id="KW-1048">Host nucleus</keyword>
<keyword id="KW-0945">Host-virus interaction</keyword>
<keyword id="KW-1104">Inhibition of host RNA polymerase II by virus</keyword>
<keyword id="KW-0506">mRNA capping</keyword>
<keyword id="KW-0507">mRNA processing</keyword>
<keyword id="KW-1195">Viral transcription</keyword>
<keyword id="KW-0946">Virion</keyword>
<organismHost>
    <name type="scientific">Homo sapiens</name>
    <name type="common">Human</name>
    <dbReference type="NCBI Taxonomy" id="9606"/>
</organismHost>
<name>PB2_INBAC</name>
<organism>
    <name type="scientific">Influenza B virus (strain B/Ann Arbor/1/1966 [cold-adapted])</name>
    <dbReference type="NCBI Taxonomy" id="11522"/>
    <lineage>
        <taxon>Viruses</taxon>
        <taxon>Riboviria</taxon>
        <taxon>Orthornavirae</taxon>
        <taxon>Negarnaviricota</taxon>
        <taxon>Polyploviricotina</taxon>
        <taxon>Insthoviricetes</taxon>
        <taxon>Articulavirales</taxon>
        <taxon>Orthomyxoviridae</taxon>
        <taxon>Betainfluenzavirus</taxon>
        <taxon>Betainfluenzavirus influenzae</taxon>
        <taxon>Influenza B virus</taxon>
    </lineage>
</organism>